<feature type="chain" id="PRO_0000214018" description="Acyl-CoA-binding protein 1">
    <location>
        <begin position="1"/>
        <end position="30" status="greater than"/>
    </location>
</feature>
<feature type="domain" description="ACB" evidence="2">
    <location>
        <begin position="2"/>
        <end position="30" status="greater than"/>
    </location>
</feature>
<feature type="region of interest" description="Disordered" evidence="3">
    <location>
        <begin position="1"/>
        <end position="30"/>
    </location>
</feature>
<feature type="compositionally biased region" description="Basic and acidic residues" evidence="3">
    <location>
        <begin position="1"/>
        <end position="15"/>
    </location>
</feature>
<feature type="non-terminal residue">
    <location>
        <position position="30"/>
    </location>
</feature>
<protein>
    <recommendedName>
        <fullName>Acyl-CoA-binding protein 1</fullName>
        <shortName>ACBP 1</shortName>
    </recommendedName>
</protein>
<dbReference type="SMR" id="P81624"/>
<dbReference type="GO" id="GO:0005737">
    <property type="term" value="C:cytoplasm"/>
    <property type="evidence" value="ECO:0007669"/>
    <property type="project" value="UniProtKB-SubCell"/>
</dbReference>
<dbReference type="GO" id="GO:0000062">
    <property type="term" value="F:fatty-acyl-CoA binding"/>
    <property type="evidence" value="ECO:0007669"/>
    <property type="project" value="InterPro"/>
</dbReference>
<dbReference type="InterPro" id="IPR000582">
    <property type="entry name" value="Acyl-CoA-binding_protein"/>
</dbReference>
<dbReference type="PROSITE" id="PS51228">
    <property type="entry name" value="ACB_2"/>
    <property type="match status" value="1"/>
</dbReference>
<proteinExistence type="evidence at protein level"/>
<organism>
    <name type="scientific">Digitalis lanata</name>
    <name type="common">Grecian foxglove</name>
    <dbReference type="NCBI Taxonomy" id="49450"/>
    <lineage>
        <taxon>Eukaryota</taxon>
        <taxon>Viridiplantae</taxon>
        <taxon>Streptophyta</taxon>
        <taxon>Embryophyta</taxon>
        <taxon>Tracheophyta</taxon>
        <taxon>Spermatophyta</taxon>
        <taxon>Magnoliopsida</taxon>
        <taxon>eudicotyledons</taxon>
        <taxon>Gunneridae</taxon>
        <taxon>Pentapetalae</taxon>
        <taxon>asterids</taxon>
        <taxon>lamiids</taxon>
        <taxon>Lamiales</taxon>
        <taxon>Plantaginaceae</taxon>
        <taxon>Digitalideae</taxon>
        <taxon>Digitalis</taxon>
    </lineage>
</organism>
<name>ACBP1_DIGLA</name>
<keyword id="KW-0963">Cytoplasm</keyword>
<keyword id="KW-0903">Direct protein sequencing</keyword>
<keyword id="KW-0446">Lipid-binding</keyword>
<keyword id="KW-0813">Transport</keyword>
<evidence type="ECO:0000250" key="1"/>
<evidence type="ECO:0000255" key="2">
    <source>
        <dbReference type="PROSITE-ProRule" id="PRU00573"/>
    </source>
</evidence>
<evidence type="ECO:0000256" key="3">
    <source>
        <dbReference type="SAM" id="MobiDB-lite"/>
    </source>
</evidence>
<evidence type="ECO:0000305" key="4"/>
<reference key="1">
    <citation type="journal article" date="2000" name="Planta">
        <title>Isolation and characterization of two acyl-CoA-binding proteins from proembryogenic masses of Digitalis lanata Ehrh.</title>
        <authorList>
            <person name="Metzner M."/>
            <person name="Ruecknagel K.P."/>
            <person name="Knudsen J."/>
            <person name="Kuellertz G."/>
            <person name="Mueller-Uri F."/>
            <person name="Diettrich B."/>
        </authorList>
    </citation>
    <scope>PROTEIN SEQUENCE</scope>
</reference>
<accession>P81624</accession>
<comment type="function">
    <text evidence="1">Binds medium- and long-chain acyl-CoA esters with very high affinity and may function as an intracellular carrier of acyl-CoA esters.</text>
</comment>
<comment type="subcellular location">
    <subcellularLocation>
        <location>Cytoplasm</location>
    </subcellularLocation>
</comment>
<comment type="similarity">
    <text evidence="4">Belongs to the ACBP family.</text>
</comment>
<sequence>ALKDEFEEHAEKAKTLPENTSNENKLILYG</sequence>